<keyword id="KW-0963">Cytoplasm</keyword>
<keyword id="KW-0324">Glycolysis</keyword>
<keyword id="KW-0520">NAD</keyword>
<keyword id="KW-0560">Oxidoreductase</keyword>
<keyword id="KW-1185">Reference proteome</keyword>
<evidence type="ECO:0000250" key="1"/>
<evidence type="ECO:0000255" key="2">
    <source>
        <dbReference type="PROSITE-ProRule" id="PRU10009"/>
    </source>
</evidence>
<evidence type="ECO:0000305" key="3"/>
<dbReference type="EC" id="1.2.1.12"/>
<dbReference type="EMBL" id="U45858">
    <property type="protein sequence ID" value="AAA87880.1"/>
    <property type="molecule type" value="Genomic_DNA"/>
</dbReference>
<dbReference type="EMBL" id="X73151">
    <property type="protein sequence ID" value="CAA51676.1"/>
    <property type="molecule type" value="Genomic_DNA"/>
</dbReference>
<dbReference type="EMBL" id="U45855">
    <property type="protein sequence ID" value="AAA87578.1"/>
    <property type="molecule type" value="mRNA"/>
</dbReference>
<dbReference type="EMBL" id="L13432">
    <property type="protein sequence ID" value="AAA33466.1"/>
    <property type="molecule type" value="mRNA"/>
</dbReference>
<dbReference type="PIR" id="PQ0178">
    <property type="entry name" value="PQ0178"/>
</dbReference>
<dbReference type="RefSeq" id="NP_001105700.1">
    <property type="nucleotide sequence ID" value="NM_001112230.2"/>
</dbReference>
<dbReference type="SMR" id="Q09054"/>
<dbReference type="FunCoup" id="Q09054">
    <property type="interactions" value="516"/>
</dbReference>
<dbReference type="STRING" id="4577.Q09054"/>
<dbReference type="PaxDb" id="4577-GRMZM2G180625_P03"/>
<dbReference type="ProMEX" id="Q09054"/>
<dbReference type="EnsemblPlants" id="Zm00001eb261430_T002">
    <property type="protein sequence ID" value="Zm00001eb261430_P002"/>
    <property type="gene ID" value="Zm00001eb261430"/>
</dbReference>
<dbReference type="GeneID" id="542718"/>
<dbReference type="Gramene" id="Zm00001eb261430_T002">
    <property type="protein sequence ID" value="Zm00001eb261430_P002"/>
    <property type="gene ID" value="Zm00001eb261430"/>
</dbReference>
<dbReference type="KEGG" id="zma:542718"/>
<dbReference type="eggNOG" id="KOG0657">
    <property type="taxonomic scope" value="Eukaryota"/>
</dbReference>
<dbReference type="InParanoid" id="Q09054"/>
<dbReference type="OrthoDB" id="1152826at2759"/>
<dbReference type="UniPathway" id="UPA00109">
    <property type="reaction ID" value="UER00184"/>
</dbReference>
<dbReference type="Proteomes" id="UP000007305">
    <property type="component" value="Chromosome 6"/>
</dbReference>
<dbReference type="ExpressionAtlas" id="Q09054">
    <property type="expression patterns" value="baseline and differential"/>
</dbReference>
<dbReference type="GO" id="GO:0005829">
    <property type="term" value="C:cytosol"/>
    <property type="evidence" value="ECO:0000318"/>
    <property type="project" value="GO_Central"/>
</dbReference>
<dbReference type="GO" id="GO:0032991">
    <property type="term" value="C:protein-containing complex"/>
    <property type="evidence" value="ECO:0000304"/>
    <property type="project" value="AgBase"/>
</dbReference>
<dbReference type="GO" id="GO:0004365">
    <property type="term" value="F:glyceraldehyde-3-phosphate dehydrogenase (NAD+) (phosphorylating) activity"/>
    <property type="evidence" value="ECO:0000318"/>
    <property type="project" value="GO_Central"/>
</dbReference>
<dbReference type="GO" id="GO:0070403">
    <property type="term" value="F:NAD+ binding"/>
    <property type="evidence" value="ECO:0000304"/>
    <property type="project" value="AgBase"/>
</dbReference>
<dbReference type="GO" id="GO:0050661">
    <property type="term" value="F:NADP binding"/>
    <property type="evidence" value="ECO:0007669"/>
    <property type="project" value="InterPro"/>
</dbReference>
<dbReference type="GO" id="GO:0042301">
    <property type="term" value="F:phosphate ion binding"/>
    <property type="evidence" value="ECO:0000304"/>
    <property type="project" value="AgBase"/>
</dbReference>
<dbReference type="GO" id="GO:0006006">
    <property type="term" value="P:glucose metabolic process"/>
    <property type="evidence" value="ECO:0007669"/>
    <property type="project" value="InterPro"/>
</dbReference>
<dbReference type="GO" id="GO:0006096">
    <property type="term" value="P:glycolytic process"/>
    <property type="evidence" value="ECO:0000318"/>
    <property type="project" value="GO_Central"/>
</dbReference>
<dbReference type="CDD" id="cd18126">
    <property type="entry name" value="GAPDH_I_C"/>
    <property type="match status" value="1"/>
</dbReference>
<dbReference type="CDD" id="cd05214">
    <property type="entry name" value="GAPDH_I_N"/>
    <property type="match status" value="1"/>
</dbReference>
<dbReference type="FunFam" id="3.30.360.10:FF:000001">
    <property type="entry name" value="Glyceraldehyde-3-phosphate dehydrogenase"/>
    <property type="match status" value="1"/>
</dbReference>
<dbReference type="FunFam" id="3.40.50.720:FF:000020">
    <property type="entry name" value="Glyceraldehyde-3-phosphate dehydrogenase"/>
    <property type="match status" value="1"/>
</dbReference>
<dbReference type="Gene3D" id="3.30.360.10">
    <property type="entry name" value="Dihydrodipicolinate Reductase, domain 2"/>
    <property type="match status" value="1"/>
</dbReference>
<dbReference type="Gene3D" id="3.40.50.720">
    <property type="entry name" value="NAD(P)-binding Rossmann-like Domain"/>
    <property type="match status" value="1"/>
</dbReference>
<dbReference type="InterPro" id="IPR020831">
    <property type="entry name" value="GlycerAld/Erythrose_P_DH"/>
</dbReference>
<dbReference type="InterPro" id="IPR020830">
    <property type="entry name" value="GlycerAld_3-P_DH_AS"/>
</dbReference>
<dbReference type="InterPro" id="IPR020829">
    <property type="entry name" value="GlycerAld_3-P_DH_cat"/>
</dbReference>
<dbReference type="InterPro" id="IPR020828">
    <property type="entry name" value="GlycerAld_3-P_DH_NAD(P)-bd"/>
</dbReference>
<dbReference type="InterPro" id="IPR006424">
    <property type="entry name" value="Glyceraldehyde-3-P_DH_1"/>
</dbReference>
<dbReference type="InterPro" id="IPR036291">
    <property type="entry name" value="NAD(P)-bd_dom_sf"/>
</dbReference>
<dbReference type="NCBIfam" id="TIGR01534">
    <property type="entry name" value="GAPDH-I"/>
    <property type="match status" value="1"/>
</dbReference>
<dbReference type="PANTHER" id="PTHR10836">
    <property type="entry name" value="GLYCERALDEHYDE 3-PHOSPHATE DEHYDROGENASE"/>
    <property type="match status" value="1"/>
</dbReference>
<dbReference type="PANTHER" id="PTHR10836:SF133">
    <property type="entry name" value="GLYCERALDEHYDE-3-PHOSPHATE DEHYDROGENASE 1, CYTOSOLIC"/>
    <property type="match status" value="1"/>
</dbReference>
<dbReference type="Pfam" id="PF02800">
    <property type="entry name" value="Gp_dh_C"/>
    <property type="match status" value="1"/>
</dbReference>
<dbReference type="Pfam" id="PF00044">
    <property type="entry name" value="Gp_dh_N"/>
    <property type="match status" value="1"/>
</dbReference>
<dbReference type="PIRSF" id="PIRSF000149">
    <property type="entry name" value="GAP_DH"/>
    <property type="match status" value="1"/>
</dbReference>
<dbReference type="PRINTS" id="PR00078">
    <property type="entry name" value="G3PDHDRGNASE"/>
</dbReference>
<dbReference type="SMART" id="SM00846">
    <property type="entry name" value="Gp_dh_N"/>
    <property type="match status" value="1"/>
</dbReference>
<dbReference type="SUPFAM" id="SSF55347">
    <property type="entry name" value="Glyceraldehyde-3-phosphate dehydrogenase-like, C-terminal domain"/>
    <property type="match status" value="1"/>
</dbReference>
<dbReference type="SUPFAM" id="SSF51735">
    <property type="entry name" value="NAD(P)-binding Rossmann-fold domains"/>
    <property type="match status" value="1"/>
</dbReference>
<dbReference type="PROSITE" id="PS00071">
    <property type="entry name" value="GAPDH"/>
    <property type="match status" value="1"/>
</dbReference>
<sequence>MGKIKIGINGFGRIGRLVARVALQSEDVELVAVNDPFITTDYMTYMFKYDTVHGQWKHSDIALKDSKTLLFGEKPVTVFGIRNPEEIPWGEAGAEYVVESTGVFTDKDKAAAHLKGGAKKVVISAPSKDAPMFVVGVNEDKYTSDVNIVSNASCTTNCLAPLAKVIHDNFGIIEGLMTTVHAITATQKTVDGPSAKDWRGGRAASFNIIPSSTGAAKAVGKVLPELNGKLTGMSFRVPTVDVSVVDLTVRIEKGASYEEIKKAIKAASEGPLKGIMGYVEEDLVSTDFTGDSRSSIFDAKAGIALNDHFIKLVSWYDNEWGYSNRVVDLIRHMFKTQ</sequence>
<comment type="function">
    <text evidence="1">Key enzyme in glycolysis that catalyzes the first step of the pathway by converting D-glyceraldehyde 3-phosphate (G3P) into 3-phospho-D-glyceroyl phosphate. Essential for the maintenance of cellular ATP levels and carbohydrate metabolism (By similarity).</text>
</comment>
<comment type="catalytic activity">
    <reaction evidence="2">
        <text>D-glyceraldehyde 3-phosphate + phosphate + NAD(+) = (2R)-3-phospho-glyceroyl phosphate + NADH + H(+)</text>
        <dbReference type="Rhea" id="RHEA:10300"/>
        <dbReference type="ChEBI" id="CHEBI:15378"/>
        <dbReference type="ChEBI" id="CHEBI:43474"/>
        <dbReference type="ChEBI" id="CHEBI:57540"/>
        <dbReference type="ChEBI" id="CHEBI:57604"/>
        <dbReference type="ChEBI" id="CHEBI:57945"/>
        <dbReference type="ChEBI" id="CHEBI:59776"/>
        <dbReference type="EC" id="1.2.1.12"/>
    </reaction>
</comment>
<comment type="pathway">
    <text>Carbohydrate degradation; glycolysis; pyruvate from D-glyceraldehyde 3-phosphate: step 1/5.</text>
</comment>
<comment type="subunit">
    <text evidence="1">Homotetramer.</text>
</comment>
<comment type="subcellular location">
    <subcellularLocation>
        <location evidence="1">Cytoplasm</location>
    </subcellularLocation>
</comment>
<comment type="tissue specificity">
    <text>Developing seeds, seedling roots and shoots, and embryo.</text>
</comment>
<comment type="developmental stage">
    <text>Expression decreases during seed development and embryo maturation.</text>
</comment>
<comment type="miscellaneous">
    <text>Plants contain two types of GAPDH: cytosolic forms which participate in glycolysis and chloroplast forms which participate in photosynthesis. All the forms are encoded by distinct genes.</text>
</comment>
<comment type="similarity">
    <text evidence="3">Belongs to the glyceraldehyde-3-phosphate dehydrogenase family.</text>
</comment>
<proteinExistence type="evidence at transcript level"/>
<gene>
    <name type="primary">GAPC2</name>
    <name type="synonym">GPC2</name>
</gene>
<name>G3PC2_MAIZE</name>
<accession>Q09054</accession>
<protein>
    <recommendedName>
        <fullName>Glyceraldehyde-3-phosphate dehydrogenase 2, cytosolic</fullName>
        <ecNumber>1.2.1.12</ecNumber>
    </recommendedName>
</protein>
<reference key="1">
    <citation type="submission" date="1993-05" db="EMBL/GenBank/DDBJ databases">
        <authorList>
            <person name="Liaud M.-F."/>
        </authorList>
    </citation>
    <scope>NUCLEOTIDE SEQUENCE</scope>
    <source>
        <strain>cv. RP704</strain>
    </source>
</reference>
<reference key="2">
    <citation type="journal article" date="1997" name="Plant Mol. Biol.">
        <title>Molecular characterization and promoter analysis of the maize cytosolic glyceraldehyde 3-phosphate dehydrogenase gene family and its expression during anoxia.</title>
        <authorList>
            <person name="Manjunath S."/>
            <person name="Sachs M.M."/>
        </authorList>
    </citation>
    <scope>NUCLEOTIDE SEQUENCE</scope>
    <source>
        <strain>cv. B73</strain>
    </source>
</reference>
<reference key="3">
    <citation type="journal article" date="1989" name="Plant Cell">
        <title>Differential expression and sequence analysis of the maize glyceraldehyde-3-phosphate dehydrogenase gene family.</title>
        <authorList>
            <person name="Russell D.A."/>
            <person name="Sachs M.M."/>
        </authorList>
    </citation>
    <scope>NUCLEOTIDE SEQUENCE OF 91-337</scope>
    <source>
        <strain>cv. Berkeley Fast</strain>
        <tissue>Coleoptile</tissue>
    </source>
</reference>
<organism>
    <name type="scientific">Zea mays</name>
    <name type="common">Maize</name>
    <dbReference type="NCBI Taxonomy" id="4577"/>
    <lineage>
        <taxon>Eukaryota</taxon>
        <taxon>Viridiplantae</taxon>
        <taxon>Streptophyta</taxon>
        <taxon>Embryophyta</taxon>
        <taxon>Tracheophyta</taxon>
        <taxon>Spermatophyta</taxon>
        <taxon>Magnoliopsida</taxon>
        <taxon>Liliopsida</taxon>
        <taxon>Poales</taxon>
        <taxon>Poaceae</taxon>
        <taxon>PACMAD clade</taxon>
        <taxon>Panicoideae</taxon>
        <taxon>Andropogonodae</taxon>
        <taxon>Andropogoneae</taxon>
        <taxon>Tripsacinae</taxon>
        <taxon>Zea</taxon>
    </lineage>
</organism>
<feature type="chain" id="PRO_0000145606" description="Glyceraldehyde-3-phosphate dehydrogenase 2, cytosolic">
    <location>
        <begin position="1"/>
        <end position="337"/>
    </location>
</feature>
<feature type="region of interest" description="Binding to NAD">
    <location>
        <begin position="1"/>
        <end position="151"/>
    </location>
</feature>
<feature type="region of interest" description="Catalytic">
    <location>
        <begin position="152"/>
        <end position="337"/>
    </location>
</feature>
<feature type="active site" description="Nucleophile" evidence="2">
    <location>
        <position position="154"/>
    </location>
</feature>
<feature type="binding site" evidence="1">
    <location>
        <begin position="13"/>
        <end position="14"/>
    </location>
    <ligand>
        <name>NAD(+)</name>
        <dbReference type="ChEBI" id="CHEBI:57540"/>
    </ligand>
</feature>
<feature type="binding site" evidence="1">
    <location>
        <position position="35"/>
    </location>
    <ligand>
        <name>NAD(+)</name>
        <dbReference type="ChEBI" id="CHEBI:57540"/>
    </ligand>
</feature>
<feature type="binding site" evidence="1">
    <location>
        <position position="82"/>
    </location>
    <ligand>
        <name>NAD(+)</name>
        <dbReference type="ChEBI" id="CHEBI:57540"/>
    </ligand>
</feature>
<feature type="binding site" evidence="1">
    <location>
        <begin position="153"/>
        <end position="155"/>
    </location>
    <ligand>
        <name>D-glyceraldehyde 3-phosphate</name>
        <dbReference type="ChEBI" id="CHEBI:59776"/>
    </ligand>
</feature>
<feature type="binding site" evidence="1">
    <location>
        <position position="184"/>
    </location>
    <ligand>
        <name>D-glyceraldehyde 3-phosphate</name>
        <dbReference type="ChEBI" id="CHEBI:59776"/>
    </ligand>
</feature>
<feature type="binding site" evidence="1">
    <location>
        <begin position="213"/>
        <end position="214"/>
    </location>
    <ligand>
        <name>D-glyceraldehyde 3-phosphate</name>
        <dbReference type="ChEBI" id="CHEBI:59776"/>
    </ligand>
</feature>
<feature type="binding site" evidence="1">
    <location>
        <position position="236"/>
    </location>
    <ligand>
        <name>D-glyceraldehyde 3-phosphate</name>
        <dbReference type="ChEBI" id="CHEBI:59776"/>
    </ligand>
</feature>
<feature type="binding site" evidence="1">
    <location>
        <position position="318"/>
    </location>
    <ligand>
        <name>NAD(+)</name>
        <dbReference type="ChEBI" id="CHEBI:57540"/>
    </ligand>
</feature>
<feature type="site" description="Activates thiol group during catalysis" evidence="1">
    <location>
        <position position="181"/>
    </location>
</feature>